<keyword id="KW-0025">Alternative splicing</keyword>
<keyword id="KW-0597">Phosphoprotein</keyword>
<keyword id="KW-1185">Reference proteome</keyword>
<accession>Q9VUC6</accession>
<accession>B7Z050</accession>
<accession>M9PCF8</accession>
<accession>Q86NT2</accession>
<accession>Q9VUC5</accession>
<name>FRL_DROME</name>
<protein>
    <recommendedName>
        <fullName evidence="9">Formin-like protein</fullName>
    </recommendedName>
    <alternativeName>
        <fullName evidence="7">Formin related in leukocytes</fullName>
    </alternativeName>
</protein>
<reference key="1">
    <citation type="journal article" date="2000" name="Science">
        <title>The genome sequence of Drosophila melanogaster.</title>
        <authorList>
            <person name="Adams M.D."/>
            <person name="Celniker S.E."/>
            <person name="Holt R.A."/>
            <person name="Evans C.A."/>
            <person name="Gocayne J.D."/>
            <person name="Amanatides P.G."/>
            <person name="Scherer S.E."/>
            <person name="Li P.W."/>
            <person name="Hoskins R.A."/>
            <person name="Galle R.F."/>
            <person name="George R.A."/>
            <person name="Lewis S.E."/>
            <person name="Richards S."/>
            <person name="Ashburner M."/>
            <person name="Henderson S.N."/>
            <person name="Sutton G.G."/>
            <person name="Wortman J.R."/>
            <person name="Yandell M.D."/>
            <person name="Zhang Q."/>
            <person name="Chen L.X."/>
            <person name="Brandon R.C."/>
            <person name="Rogers Y.-H.C."/>
            <person name="Blazej R.G."/>
            <person name="Champe M."/>
            <person name="Pfeiffer B.D."/>
            <person name="Wan K.H."/>
            <person name="Doyle C."/>
            <person name="Baxter E.G."/>
            <person name="Helt G."/>
            <person name="Nelson C.R."/>
            <person name="Miklos G.L.G."/>
            <person name="Abril J.F."/>
            <person name="Agbayani A."/>
            <person name="An H.-J."/>
            <person name="Andrews-Pfannkoch C."/>
            <person name="Baldwin D."/>
            <person name="Ballew R.M."/>
            <person name="Basu A."/>
            <person name="Baxendale J."/>
            <person name="Bayraktaroglu L."/>
            <person name="Beasley E.M."/>
            <person name="Beeson K.Y."/>
            <person name="Benos P.V."/>
            <person name="Berman B.P."/>
            <person name="Bhandari D."/>
            <person name="Bolshakov S."/>
            <person name="Borkova D."/>
            <person name="Botchan M.R."/>
            <person name="Bouck J."/>
            <person name="Brokstein P."/>
            <person name="Brottier P."/>
            <person name="Burtis K.C."/>
            <person name="Busam D.A."/>
            <person name="Butler H."/>
            <person name="Cadieu E."/>
            <person name="Center A."/>
            <person name="Chandra I."/>
            <person name="Cherry J.M."/>
            <person name="Cawley S."/>
            <person name="Dahlke C."/>
            <person name="Davenport L.B."/>
            <person name="Davies P."/>
            <person name="de Pablos B."/>
            <person name="Delcher A."/>
            <person name="Deng Z."/>
            <person name="Mays A.D."/>
            <person name="Dew I."/>
            <person name="Dietz S.M."/>
            <person name="Dodson K."/>
            <person name="Doup L.E."/>
            <person name="Downes M."/>
            <person name="Dugan-Rocha S."/>
            <person name="Dunkov B.C."/>
            <person name="Dunn P."/>
            <person name="Durbin K.J."/>
            <person name="Evangelista C.C."/>
            <person name="Ferraz C."/>
            <person name="Ferriera S."/>
            <person name="Fleischmann W."/>
            <person name="Fosler C."/>
            <person name="Gabrielian A.E."/>
            <person name="Garg N.S."/>
            <person name="Gelbart W.M."/>
            <person name="Glasser K."/>
            <person name="Glodek A."/>
            <person name="Gong F."/>
            <person name="Gorrell J.H."/>
            <person name="Gu Z."/>
            <person name="Guan P."/>
            <person name="Harris M."/>
            <person name="Harris N.L."/>
            <person name="Harvey D.A."/>
            <person name="Heiman T.J."/>
            <person name="Hernandez J.R."/>
            <person name="Houck J."/>
            <person name="Hostin D."/>
            <person name="Houston K.A."/>
            <person name="Howland T.J."/>
            <person name="Wei M.-H."/>
            <person name="Ibegwam C."/>
            <person name="Jalali M."/>
            <person name="Kalush F."/>
            <person name="Karpen G.H."/>
            <person name="Ke Z."/>
            <person name="Kennison J.A."/>
            <person name="Ketchum K.A."/>
            <person name="Kimmel B.E."/>
            <person name="Kodira C.D."/>
            <person name="Kraft C.L."/>
            <person name="Kravitz S."/>
            <person name="Kulp D."/>
            <person name="Lai Z."/>
            <person name="Lasko P."/>
            <person name="Lei Y."/>
            <person name="Levitsky A.A."/>
            <person name="Li J.H."/>
            <person name="Li Z."/>
            <person name="Liang Y."/>
            <person name="Lin X."/>
            <person name="Liu X."/>
            <person name="Mattei B."/>
            <person name="McIntosh T.C."/>
            <person name="McLeod M.P."/>
            <person name="McPherson D."/>
            <person name="Merkulov G."/>
            <person name="Milshina N.V."/>
            <person name="Mobarry C."/>
            <person name="Morris J."/>
            <person name="Moshrefi A."/>
            <person name="Mount S.M."/>
            <person name="Moy M."/>
            <person name="Murphy B."/>
            <person name="Murphy L."/>
            <person name="Muzny D.M."/>
            <person name="Nelson D.L."/>
            <person name="Nelson D.R."/>
            <person name="Nelson K.A."/>
            <person name="Nixon K."/>
            <person name="Nusskern D.R."/>
            <person name="Pacleb J.M."/>
            <person name="Palazzolo M."/>
            <person name="Pittman G.S."/>
            <person name="Pan S."/>
            <person name="Pollard J."/>
            <person name="Puri V."/>
            <person name="Reese M.G."/>
            <person name="Reinert K."/>
            <person name="Remington K."/>
            <person name="Saunders R.D.C."/>
            <person name="Scheeler F."/>
            <person name="Shen H."/>
            <person name="Shue B.C."/>
            <person name="Siden-Kiamos I."/>
            <person name="Simpson M."/>
            <person name="Skupski M.P."/>
            <person name="Smith T.J."/>
            <person name="Spier E."/>
            <person name="Spradling A.C."/>
            <person name="Stapleton M."/>
            <person name="Strong R."/>
            <person name="Sun E."/>
            <person name="Svirskas R."/>
            <person name="Tector C."/>
            <person name="Turner R."/>
            <person name="Venter E."/>
            <person name="Wang A.H."/>
            <person name="Wang X."/>
            <person name="Wang Z.-Y."/>
            <person name="Wassarman D.A."/>
            <person name="Weinstock G.M."/>
            <person name="Weissenbach J."/>
            <person name="Williams S.M."/>
            <person name="Woodage T."/>
            <person name="Worley K.C."/>
            <person name="Wu D."/>
            <person name="Yang S."/>
            <person name="Yao Q.A."/>
            <person name="Ye J."/>
            <person name="Yeh R.-F."/>
            <person name="Zaveri J.S."/>
            <person name="Zhan M."/>
            <person name="Zhang G."/>
            <person name="Zhao Q."/>
            <person name="Zheng L."/>
            <person name="Zheng X.H."/>
            <person name="Zhong F.N."/>
            <person name="Zhong W."/>
            <person name="Zhou X."/>
            <person name="Zhu S.C."/>
            <person name="Zhu X."/>
            <person name="Smith H.O."/>
            <person name="Gibbs R.A."/>
            <person name="Myers E.W."/>
            <person name="Rubin G.M."/>
            <person name="Venter J.C."/>
        </authorList>
    </citation>
    <scope>NUCLEOTIDE SEQUENCE [LARGE SCALE GENOMIC DNA]</scope>
    <source>
        <strain>Berkeley</strain>
    </source>
</reference>
<reference key="2">
    <citation type="journal article" date="2002" name="Genome Biol.">
        <title>Annotation of the Drosophila melanogaster euchromatic genome: a systematic review.</title>
        <authorList>
            <person name="Misra S."/>
            <person name="Crosby M.A."/>
            <person name="Mungall C.J."/>
            <person name="Matthews B.B."/>
            <person name="Campbell K.S."/>
            <person name="Hradecky P."/>
            <person name="Huang Y."/>
            <person name="Kaminker J.S."/>
            <person name="Millburn G.H."/>
            <person name="Prochnik S.E."/>
            <person name="Smith C.D."/>
            <person name="Tupy J.L."/>
            <person name="Whitfield E.J."/>
            <person name="Bayraktaroglu L."/>
            <person name="Berman B.P."/>
            <person name="Bettencourt B.R."/>
            <person name="Celniker S.E."/>
            <person name="de Grey A.D.N.J."/>
            <person name="Drysdale R.A."/>
            <person name="Harris N.L."/>
            <person name="Richter J."/>
            <person name="Russo S."/>
            <person name="Schroeder A.J."/>
            <person name="Shu S.Q."/>
            <person name="Stapleton M."/>
            <person name="Yamada C."/>
            <person name="Ashburner M."/>
            <person name="Gelbart W.M."/>
            <person name="Rubin G.M."/>
            <person name="Lewis S.E."/>
        </authorList>
    </citation>
    <scope>GENOME REANNOTATION</scope>
    <source>
        <strain>Berkeley</strain>
    </source>
</reference>
<reference key="3">
    <citation type="submission" date="2003-02" db="EMBL/GenBank/DDBJ databases">
        <authorList>
            <person name="Stapleton M."/>
            <person name="Brokstein P."/>
            <person name="Hong L."/>
            <person name="Agbayani A."/>
            <person name="Carlson J.W."/>
            <person name="Champe M."/>
            <person name="Chavez C."/>
            <person name="Dorsett V."/>
            <person name="Dresnek D."/>
            <person name="Farfan D."/>
            <person name="Frise E."/>
            <person name="George R.A."/>
            <person name="Gonzalez M."/>
            <person name="Guarin H."/>
            <person name="Kronmiller B."/>
            <person name="Li P.W."/>
            <person name="Liao G."/>
            <person name="Miranda A."/>
            <person name="Mungall C.J."/>
            <person name="Nunoo J."/>
            <person name="Pacleb J.M."/>
            <person name="Paragas V."/>
            <person name="Park S."/>
            <person name="Patel S."/>
            <person name="Phouanenavong S."/>
            <person name="Wan K.H."/>
            <person name="Yu C."/>
            <person name="Lewis S.E."/>
            <person name="Rubin G.M."/>
            <person name="Celniker S.E."/>
        </authorList>
    </citation>
    <scope>NUCLEOTIDE SEQUENCE [LARGE SCALE MRNA] (ISOFORM C)</scope>
    <source>
        <strain>Berkeley</strain>
        <tissue>Testis</tissue>
    </source>
</reference>
<reference key="4">
    <citation type="journal article" date="2007" name="Mol. Biosyst.">
        <title>An integrated chemical, mass spectrometric and computational strategy for (quantitative) phosphoproteomics: application to Drosophila melanogaster Kc167 cells.</title>
        <authorList>
            <person name="Bodenmiller B."/>
            <person name="Mueller L.N."/>
            <person name="Pedrioli P.G.A."/>
            <person name="Pflieger D."/>
            <person name="Juenger M.A."/>
            <person name="Eng J.K."/>
            <person name="Aebersold R."/>
            <person name="Tao W.A."/>
        </authorList>
    </citation>
    <scope>PHOSPHORYLATION [LARGE SCALE ANALYSIS] AT SER-225</scope>
    <scope>IDENTIFICATION BY MASS SPECTROMETRY</scope>
</reference>
<reference key="5">
    <citation type="journal article" date="2016" name="Genetics">
        <title>Unique and Overlapping Functions of Formins Frl and DAAM During Ommatidial Rotation and Neuronal Development in Drosophila.</title>
        <authorList>
            <person name="Dollar G."/>
            <person name="Gombos R."/>
            <person name="Barnett A.A."/>
            <person name="Sanchez Hernandez D."/>
            <person name="Maung S.M."/>
            <person name="Mihaly J."/>
            <person name="Jenny A."/>
        </authorList>
    </citation>
    <scope>FUNCTION</scope>
    <scope>SELF-ASSOCIATION</scope>
    <scope>INTERACTION WITH CDC42</scope>
    <scope>DISRUPTION PHENOTYPE</scope>
    <scope>MUTAGENESIS OF 373-ARG--CYS-1183 AND 683-GLY--LYS-1131</scope>
</reference>
<dbReference type="EMBL" id="AE014296">
    <property type="protein sequence ID" value="AAF49761.3"/>
    <property type="molecule type" value="Genomic_DNA"/>
</dbReference>
<dbReference type="EMBL" id="AE014296">
    <property type="protein sequence ID" value="AAF49762.3"/>
    <property type="molecule type" value="Genomic_DNA"/>
</dbReference>
<dbReference type="EMBL" id="AE014296">
    <property type="protein sequence ID" value="ACL83303.1"/>
    <property type="molecule type" value="Genomic_DNA"/>
</dbReference>
<dbReference type="EMBL" id="AE014296">
    <property type="protein sequence ID" value="AGB94517.1"/>
    <property type="molecule type" value="Genomic_DNA"/>
</dbReference>
<dbReference type="EMBL" id="BT003654">
    <property type="protein sequence ID" value="AAO39658.1"/>
    <property type="status" value="ALT_INIT"/>
    <property type="molecule type" value="mRNA"/>
</dbReference>
<dbReference type="RefSeq" id="NP_001137948.1">
    <molecule id="Q9VUC6-3"/>
    <property type="nucleotide sequence ID" value="NM_001144476.3"/>
</dbReference>
<dbReference type="RefSeq" id="NP_001261824.1">
    <molecule id="Q9VUC6-4"/>
    <property type="nucleotide sequence ID" value="NM_001274895.2"/>
</dbReference>
<dbReference type="RefSeq" id="NP_729954.2">
    <molecule id="Q9VUC6-1"/>
    <property type="nucleotide sequence ID" value="NM_168575.4"/>
</dbReference>
<dbReference type="RefSeq" id="NP_729955.2">
    <molecule id="Q9VUC6-2"/>
    <property type="nucleotide sequence ID" value="NM_168576.4"/>
</dbReference>
<dbReference type="SMR" id="Q9VUC6"/>
<dbReference type="BioGRID" id="64899">
    <property type="interactions" value="30"/>
</dbReference>
<dbReference type="FunCoup" id="Q9VUC6">
    <property type="interactions" value="659"/>
</dbReference>
<dbReference type="IntAct" id="Q9VUC6">
    <property type="interactions" value="59"/>
</dbReference>
<dbReference type="STRING" id="7227.FBpp0075517"/>
<dbReference type="iPTMnet" id="Q9VUC6"/>
<dbReference type="PaxDb" id="7227-FBpp0075517"/>
<dbReference type="EnsemblMetazoa" id="FBtr0075775">
    <molecule id="Q9VUC6-1"/>
    <property type="protein sequence ID" value="FBpp0075517"/>
    <property type="gene ID" value="FBgn0267795"/>
</dbReference>
<dbReference type="EnsemblMetazoa" id="FBtr0075776">
    <molecule id="Q9VUC6-2"/>
    <property type="protein sequence ID" value="FBpp0075518"/>
    <property type="gene ID" value="FBgn0267795"/>
</dbReference>
<dbReference type="EnsemblMetazoa" id="FBtr0114573">
    <molecule id="Q9VUC6-3"/>
    <property type="protein sequence ID" value="FBpp0113065"/>
    <property type="gene ID" value="FBgn0267795"/>
</dbReference>
<dbReference type="EnsemblMetazoa" id="FBtr0334053">
    <molecule id="Q9VUC6-4"/>
    <property type="protein sequence ID" value="FBpp0306179"/>
    <property type="gene ID" value="FBgn0267795"/>
</dbReference>
<dbReference type="GeneID" id="39561"/>
<dbReference type="KEGG" id="dme:Dmel_CG32138"/>
<dbReference type="UCSC" id="CG32138-RA">
    <molecule id="Q9VUC6-1"/>
    <property type="organism name" value="d. melanogaster"/>
</dbReference>
<dbReference type="UCSC" id="CG32138-RB">
    <property type="organism name" value="d. melanogaster"/>
</dbReference>
<dbReference type="UCSC" id="CG32138-RC">
    <property type="organism name" value="d. melanogaster"/>
</dbReference>
<dbReference type="AGR" id="FB:FBgn0267795"/>
<dbReference type="CTD" id="103936"/>
<dbReference type="FlyBase" id="FBgn0267795">
    <property type="gene designation" value="Frl"/>
</dbReference>
<dbReference type="VEuPathDB" id="VectorBase:FBgn0267795"/>
<dbReference type="eggNOG" id="KOG1923">
    <property type="taxonomic scope" value="Eukaryota"/>
</dbReference>
<dbReference type="GeneTree" id="ENSGT00940000169082"/>
<dbReference type="InParanoid" id="Q9VUC6"/>
<dbReference type="OMA" id="MMPGFSP"/>
<dbReference type="OrthoDB" id="1668162at2759"/>
<dbReference type="PhylomeDB" id="Q9VUC6"/>
<dbReference type="Reactome" id="R-DME-5663220">
    <property type="pathway name" value="RHO GTPases Activate Formins"/>
</dbReference>
<dbReference type="Reactome" id="R-DME-8980692">
    <property type="pathway name" value="RHOA GTPase cycle"/>
</dbReference>
<dbReference type="Reactome" id="R-DME-9013149">
    <property type="pathway name" value="RAC1 GTPase cycle"/>
</dbReference>
<dbReference type="SignaLink" id="Q9VUC6"/>
<dbReference type="BioGRID-ORCS" id="39561">
    <property type="hits" value="1 hit in 3 CRISPR screens"/>
</dbReference>
<dbReference type="GenomeRNAi" id="39561"/>
<dbReference type="PRO" id="PR:Q9VUC6"/>
<dbReference type="Proteomes" id="UP000000803">
    <property type="component" value="Chromosome 3L"/>
</dbReference>
<dbReference type="Bgee" id="FBgn0267795">
    <property type="expression patterns" value="Expressed in tormogen cell in proboscis and 277 other cell types or tissues"/>
</dbReference>
<dbReference type="ExpressionAtlas" id="Q9VUC6">
    <property type="expression patterns" value="baseline and differential"/>
</dbReference>
<dbReference type="GO" id="GO:0005829">
    <property type="term" value="C:cytosol"/>
    <property type="evidence" value="ECO:0000318"/>
    <property type="project" value="GO_Central"/>
</dbReference>
<dbReference type="GO" id="GO:0051015">
    <property type="term" value="F:actin filament binding"/>
    <property type="evidence" value="ECO:0000318"/>
    <property type="project" value="GO_Central"/>
</dbReference>
<dbReference type="GO" id="GO:0051020">
    <property type="term" value="F:GTPase binding"/>
    <property type="evidence" value="ECO:0000353"/>
    <property type="project" value="UniProtKB"/>
</dbReference>
<dbReference type="GO" id="GO:0031267">
    <property type="term" value="F:small GTPase binding"/>
    <property type="evidence" value="ECO:0000353"/>
    <property type="project" value="UniProtKB"/>
</dbReference>
<dbReference type="GO" id="GO:0048675">
    <property type="term" value="P:axon extension"/>
    <property type="evidence" value="ECO:0000316"/>
    <property type="project" value="FlyBase"/>
</dbReference>
<dbReference type="GO" id="GO:0016477">
    <property type="term" value="P:cell migration"/>
    <property type="evidence" value="ECO:0000318"/>
    <property type="project" value="GO_Central"/>
</dbReference>
<dbReference type="GO" id="GO:0030866">
    <property type="term" value="P:cortical actin cytoskeleton organization"/>
    <property type="evidence" value="ECO:0000318"/>
    <property type="project" value="GO_Central"/>
</dbReference>
<dbReference type="GO" id="GO:0016319">
    <property type="term" value="P:mushroom body development"/>
    <property type="evidence" value="ECO:0000315"/>
    <property type="project" value="FlyBase"/>
</dbReference>
<dbReference type="GO" id="GO:0016318">
    <property type="term" value="P:ommatidial rotation"/>
    <property type="evidence" value="ECO:0000315"/>
    <property type="project" value="FlyBase"/>
</dbReference>
<dbReference type="GO" id="GO:0008360">
    <property type="term" value="P:regulation of cell shape"/>
    <property type="evidence" value="ECO:0000318"/>
    <property type="project" value="GO_Central"/>
</dbReference>
<dbReference type="FunFam" id="1.20.58.2220:FF:000010">
    <property type="entry name" value="Uncharacterized protein, isoform C"/>
    <property type="match status" value="1"/>
</dbReference>
<dbReference type="Gene3D" id="1.20.58.2220">
    <property type="entry name" value="Formin, FH2 domain"/>
    <property type="match status" value="1"/>
</dbReference>
<dbReference type="Gene3D" id="1.25.10.10">
    <property type="entry name" value="Leucine-rich Repeat Variant"/>
    <property type="match status" value="2"/>
</dbReference>
<dbReference type="InterPro" id="IPR011989">
    <property type="entry name" value="ARM-like"/>
</dbReference>
<dbReference type="InterPro" id="IPR016024">
    <property type="entry name" value="ARM-type_fold"/>
</dbReference>
<dbReference type="InterPro" id="IPR014767">
    <property type="entry name" value="DAD_dom"/>
</dbReference>
<dbReference type="InterPro" id="IPR015425">
    <property type="entry name" value="FH2_Formin"/>
</dbReference>
<dbReference type="InterPro" id="IPR042201">
    <property type="entry name" value="FH2_Formin_sf"/>
</dbReference>
<dbReference type="InterPro" id="IPR010472">
    <property type="entry name" value="FH3_dom"/>
</dbReference>
<dbReference type="InterPro" id="IPR043592">
    <property type="entry name" value="FMNL_animal"/>
</dbReference>
<dbReference type="InterPro" id="IPR014768">
    <property type="entry name" value="GBD/FH3_dom"/>
</dbReference>
<dbReference type="InterPro" id="IPR010473">
    <property type="entry name" value="GTPase-bd"/>
</dbReference>
<dbReference type="PANTHER" id="PTHR45857">
    <property type="entry name" value="FORMIN-LIKE PROTEIN"/>
    <property type="match status" value="1"/>
</dbReference>
<dbReference type="PANTHER" id="PTHR45857:SF4">
    <property type="entry name" value="FORMIN-LIKE PROTEIN"/>
    <property type="match status" value="1"/>
</dbReference>
<dbReference type="Pfam" id="PF06367">
    <property type="entry name" value="Drf_FH3"/>
    <property type="match status" value="1"/>
</dbReference>
<dbReference type="Pfam" id="PF06371">
    <property type="entry name" value="Drf_GBD"/>
    <property type="match status" value="2"/>
</dbReference>
<dbReference type="Pfam" id="PF02181">
    <property type="entry name" value="FH2"/>
    <property type="match status" value="1"/>
</dbReference>
<dbReference type="SMART" id="SM01139">
    <property type="entry name" value="Drf_FH3"/>
    <property type="match status" value="1"/>
</dbReference>
<dbReference type="SMART" id="SM01140">
    <property type="entry name" value="Drf_GBD"/>
    <property type="match status" value="1"/>
</dbReference>
<dbReference type="SMART" id="SM00498">
    <property type="entry name" value="FH2"/>
    <property type="match status" value="1"/>
</dbReference>
<dbReference type="SUPFAM" id="SSF48371">
    <property type="entry name" value="ARM repeat"/>
    <property type="match status" value="1"/>
</dbReference>
<dbReference type="SUPFAM" id="SSF101447">
    <property type="entry name" value="Formin homology 2 domain (FH2 domain)"/>
    <property type="match status" value="1"/>
</dbReference>
<dbReference type="PROSITE" id="PS51231">
    <property type="entry name" value="DAD"/>
    <property type="match status" value="1"/>
</dbReference>
<dbReference type="PROSITE" id="PS51444">
    <property type="entry name" value="FH2"/>
    <property type="match status" value="1"/>
</dbReference>
<dbReference type="PROSITE" id="PS51232">
    <property type="entry name" value="GBD_FH3"/>
    <property type="match status" value="1"/>
</dbReference>
<organism>
    <name type="scientific">Drosophila melanogaster</name>
    <name type="common">Fruit fly</name>
    <dbReference type="NCBI Taxonomy" id="7227"/>
    <lineage>
        <taxon>Eukaryota</taxon>
        <taxon>Metazoa</taxon>
        <taxon>Ecdysozoa</taxon>
        <taxon>Arthropoda</taxon>
        <taxon>Hexapoda</taxon>
        <taxon>Insecta</taxon>
        <taxon>Pterygota</taxon>
        <taxon>Neoptera</taxon>
        <taxon>Endopterygota</taxon>
        <taxon>Diptera</taxon>
        <taxon>Brachycera</taxon>
        <taxon>Muscomorpha</taxon>
        <taxon>Ephydroidea</taxon>
        <taxon>Drosophilidae</taxon>
        <taxon>Drosophila</taxon>
        <taxon>Sophophora</taxon>
    </lineage>
</organism>
<feature type="chain" id="PRO_0000372648" description="Formin-like protein">
    <location>
        <begin position="1"/>
        <end position="1183"/>
    </location>
</feature>
<feature type="domain" description="GBD/FH3" evidence="2">
    <location>
        <begin position="76"/>
        <end position="559"/>
    </location>
</feature>
<feature type="domain" description="FH2" evidence="3">
    <location>
        <begin position="687"/>
        <end position="1088"/>
    </location>
</feature>
<feature type="domain" description="DAD" evidence="1">
    <location>
        <begin position="1136"/>
        <end position="1169"/>
    </location>
</feature>
<feature type="region of interest" description="Disordered" evidence="4">
    <location>
        <begin position="1"/>
        <end position="44"/>
    </location>
</feature>
<feature type="region of interest" description="Disordered" evidence="4">
    <location>
        <begin position="63"/>
        <end position="82"/>
    </location>
</feature>
<feature type="region of interest" description="Disordered" evidence="4">
    <location>
        <begin position="572"/>
        <end position="681"/>
    </location>
</feature>
<feature type="compositionally biased region" description="Basic residues" evidence="4">
    <location>
        <begin position="23"/>
        <end position="36"/>
    </location>
</feature>
<feature type="compositionally biased region" description="Polar residues" evidence="4">
    <location>
        <begin position="63"/>
        <end position="79"/>
    </location>
</feature>
<feature type="compositionally biased region" description="Polar residues" evidence="4">
    <location>
        <begin position="572"/>
        <end position="584"/>
    </location>
</feature>
<feature type="compositionally biased region" description="Pro residues" evidence="4">
    <location>
        <begin position="605"/>
        <end position="614"/>
    </location>
</feature>
<feature type="compositionally biased region" description="Pro residues" evidence="4">
    <location>
        <begin position="622"/>
        <end position="640"/>
    </location>
</feature>
<feature type="compositionally biased region" description="Low complexity" evidence="4">
    <location>
        <begin position="641"/>
        <end position="654"/>
    </location>
</feature>
<feature type="modified residue" description="Phosphoserine" evidence="5">
    <location>
        <position position="225"/>
    </location>
</feature>
<feature type="splice variant" id="VSP_037173" description="In isoform B, isoform C and isoform D." evidence="8">
    <location>
        <begin position="150"/>
        <end position="158"/>
    </location>
</feature>
<feature type="splice variant" id="VSP_059691" description="In isoform D." evidence="9">
    <original>LPSNGALSLQEAVINELKS</original>
    <variation>QIHCLLDFANQQQKQLAQS</variation>
    <location>
        <begin position="1104"/>
        <end position="1122"/>
    </location>
</feature>
<feature type="splice variant" id="VSP_037175" description="In isoform B." evidence="9">
    <location>
        <begin position="1104"/>
        <end position="1113"/>
    </location>
</feature>
<feature type="splice variant" id="VSP_059692" description="In isoform D." evidence="9">
    <location>
        <begin position="1123"/>
        <end position="1183"/>
    </location>
</feature>
<feature type="mutagenesis site" description="Loss of autoinhibition mediated by self-association results in severe eye defects including loss of R-cells." evidence="6">
    <location>
        <begin position="373"/>
        <end position="1183"/>
    </location>
</feature>
<feature type="mutagenesis site" description="Loss of autoinhibition mediated by self-association results in rotation defects in the adult eye." evidence="6">
    <location>
        <begin position="683"/>
        <end position="1131"/>
    </location>
</feature>
<feature type="sequence conflict" description="In Ref. 3; AAO39658." evidence="9" ref="3">
    <original>S</original>
    <variation>P</variation>
    <location>
        <position position="25"/>
    </location>
</feature>
<feature type="sequence conflict" description="In Ref. 3; AAO39658." evidence="9" ref="3">
    <original>SSV</original>
    <variation>TSF</variation>
    <location>
        <begin position="246"/>
        <end position="248"/>
    </location>
</feature>
<evidence type="ECO:0000255" key="1">
    <source>
        <dbReference type="PROSITE-ProRule" id="PRU00577"/>
    </source>
</evidence>
<evidence type="ECO:0000255" key="2">
    <source>
        <dbReference type="PROSITE-ProRule" id="PRU00579"/>
    </source>
</evidence>
<evidence type="ECO:0000255" key="3">
    <source>
        <dbReference type="PROSITE-ProRule" id="PRU00774"/>
    </source>
</evidence>
<evidence type="ECO:0000256" key="4">
    <source>
        <dbReference type="SAM" id="MobiDB-lite"/>
    </source>
</evidence>
<evidence type="ECO:0000269" key="5">
    <source>
    </source>
</evidence>
<evidence type="ECO:0000269" key="6">
    <source>
    </source>
</evidence>
<evidence type="ECO:0000303" key="7">
    <source>
    </source>
</evidence>
<evidence type="ECO:0000303" key="8">
    <source ref="3"/>
</evidence>
<evidence type="ECO:0000305" key="9"/>
<evidence type="ECO:0000305" key="10">
    <source>
    </source>
</evidence>
<evidence type="ECO:0000312" key="11">
    <source>
        <dbReference type="FlyBase" id="FBgn0267795"/>
    </source>
</evidence>
<proteinExistence type="evidence at protein level"/>
<gene>
    <name evidence="7 11" type="primary">Frl</name>
    <name evidence="11" type="ORF">CG32138</name>
</gene>
<comment type="function">
    <text evidence="6">Together with Cdc42, involved in establishment of planar cell polarity in the developing compound eye by contributing to ommatidial rotation. Together with DAAM and Cdc42, has a role in neuronal development of mushroom bodies.</text>
</comment>
<comment type="subunit">
    <text evidence="6">Self-associates. Interacts (via GBD/FH3 domain) with Cdc42; the interaction is stronger with the GTP bound form of Cdc42.</text>
</comment>
<comment type="alternative products">
    <event type="alternative splicing"/>
    <isoform>
        <id>Q9VUC6-1</id>
        <name>A</name>
        <sequence type="displayed"/>
    </isoform>
    <isoform>
        <id>Q9VUC6-2</id>
        <name>B</name>
        <sequence type="described" ref="VSP_037173 VSP_037175"/>
    </isoform>
    <isoform>
        <id>Q9VUC6-3</id>
        <name>C</name>
        <sequence type="described" ref="VSP_037173"/>
    </isoform>
    <isoform>
        <id>Q9VUC6-4</id>
        <name evidence="11">D</name>
        <sequence type="described" ref="VSP_037173 VSP_059691 VSP_059692"/>
    </isoform>
</comment>
<comment type="domain">
    <text evidence="10">The DAD domain regulates activation via by an autoinhibitory interaction with the GBD/FH3 domain. This autoinhibition is released upon competitive binding of an activated GTPase. The release of DAD allows the FH2 domain to then nucleate and elongate nonbranched actin filaments.</text>
</comment>
<comment type="disruption phenotype">
    <text evidence="6">Lethal; shows planar cell polarity defects with abnormal ommatidial orientation. RNAi-mediated knockdown in the eye results in planar cell polarity defects with ommatidia showing defective rotation.</text>
</comment>
<comment type="similarity">
    <text evidence="9">Belongs to the formin homology family.</text>
</comment>
<comment type="sequence caution" evidence="9">
    <conflict type="erroneous initiation">
        <sequence resource="EMBL-CDS" id="AAO39658"/>
    </conflict>
</comment>
<sequence length="1183" mass="133159">MGAVKSRTITSADVDADEQLQHPHSHAHHHSMRNGHQHNGSISSGTLQKQDLRYDIGCSSQYQHVRQPSLRSRSQQPMPTTDELDRRFAKVLASMDLPPDKAKLLRNYDDEKKWDMICDQEMVQAKDPPSHYLSKLRTYLDPKASRSHRLYLFYFLCQKRKMVGESTSTQVLRDLEISLRTNHIEWVKEFLDDTNQGLDALVDYLSFRLQMMRHEQRLQGVLCASEERLNLTNGGDGGEIVMGNSSSVSPGGGGGLLSHGNSTGHGLANGTLDSRQQHTMSYGFLRPTIADALDSPSLKRRSRHIAKLNMGAATDDIHVSIMCLRAIMNNKYGFNMVIQHREAINCIALSLIHKSLRTKALVLELLAAICLVKGGHEIILGSFDNFKDVCQEKRRFQTLMEYFMNFEAFNIDFMVACMQFMNIVVHSVEDMNYRVHLQYEFTALGLDKYLERIRLTESEELKVQISAYLDNVFDVAALMEDSETKTSALERVQELEDQLEREIDRNSEFLYKYAELESESLTLKTEREQLAMIRQKLEEELTVMQRMLQHNEQELKKRDTLLHTKNMELQTLSRSLPRSASSGDGSLANGGLMAGSTSGAASLTLPPPPPPMPASPTASSAAPPPPPPPAPPAPPPPPGFSPLGSPSGSLASTAPSPPHAPPMLSSFQPPPPPVAGFMPAPDGAMTIKRKVPTKYKLPTLNWIALKPNQVRGTIFNELDDEKIFKQIDFNEFEERFKIGIGGALRNGSNGTEVDGSLQSSKRFKRPDNVSLLEHTRLRNIAISRRKLGMPIDDVIAAIHSLDLKKLSLENVELLQKMVPTDAEVKSYKEYIIERKDQQLLTEEDKFMLQLSRVERISSKLAIMNYMGNFVDSVHLISPQVQSIAGASTSLKQSRKFKAVLEIVLAFGNYLNSNKRGPAYGFKLQSLDTLIDTKSTDKRSSLLHYIVATIRAKFPELLNFESELYGTDKAASVALENVVADVQELEKGMDLVRKEAELRVKGAQTHILRDFLNNSEDKLKKIKSDLRHAQEAFKECVEYFGDSSRNADAAAFFALIVRFTRAFKQHDQENEQRLRLEKAAALAASKKENDQVLMRNKVNQKKQQLPSNGALSLQEAVINELKSKAHSVREKKLLQQDEVYNGALEDILLGLKSEPYRRADAVRRSQRRRIDNNRLSRTLEEMDC</sequence>